<sequence length="600" mass="66904">MPQRQPPGTEEGWYILHDFRSIDWDAWRDAPDRERERALETGTDYLQAHVDLKDAEEGASAVFSILGHKADFMVLHLRPTLDHLDHAERRFESTALAEFTEQSSSYVSVTEVSGYMHEELTDGLDDLEDEGMRNYMKQRIYPELPDADHVCFYPMSKRRGPDHNWYDLPFDERREYMSNHGDVGRQYADKVSQIIAGSIGFDDYEWGITLFADDPTDIKDLLYEMRFDPSSSKFAEFGPFYIGQQFEPSELSSLFAAEPLTSETGHGGADSQTSSESSGGRPSTDPSHDEIAAEDLESRLGRFGVDLEEYPAAGYALCFESSADAEAVSDEVDGLRENFDHYDTHVMTTVRAEGGETAAISLWKNERAATTASGFLGDLPGAAEGVGAPLDGSGDAATHGTDEDDEIRGELADADIYAGQPHGEDVYALVLYSEADPDELRDELGALAEHFERYDTHIKSAVYDAEVGGDRTAVVSLWDEKDAADTAAEHLSDLPDIVARAGEDEESGFGTMGMFYTVKPDYREDFVETFDEVGGLLADMDGHLETQLMVNEDDENDMFIASQWRDKEAAMAFFRSDAFRETVEYGREVLADRPRHVFLA</sequence>
<feature type="chain" id="PRO_0000294063" description="Putative heme-binding protein NP_2262A">
    <location>
        <begin position="1"/>
        <end position="600"/>
    </location>
</feature>
<feature type="domain" description="ABM">
    <location>
        <begin position="510"/>
        <end position="598"/>
    </location>
</feature>
<feature type="region of interest" description="Disordered" evidence="2">
    <location>
        <begin position="261"/>
        <end position="289"/>
    </location>
</feature>
<feature type="compositionally biased region" description="Polar residues" evidence="2">
    <location>
        <begin position="270"/>
        <end position="285"/>
    </location>
</feature>
<feature type="binding site" description="axial binding residue" evidence="1">
    <location>
        <position position="180"/>
    </location>
    <ligand>
        <name>heme</name>
        <dbReference type="ChEBI" id="CHEBI:30413"/>
    </ligand>
    <ligandPart>
        <name>Fe</name>
        <dbReference type="ChEBI" id="CHEBI:18248"/>
    </ligandPart>
</feature>
<name>Y2262_NATPD</name>
<gene>
    <name evidence="4" type="primary">hemQ</name>
    <name type="ordered locus">NP_2262A</name>
</gene>
<keyword id="KW-0349">Heme</keyword>
<keyword id="KW-0408">Iron</keyword>
<keyword id="KW-0479">Metal-binding</keyword>
<keyword id="KW-1185">Reference proteome</keyword>
<reference key="1">
    <citation type="journal article" date="2005" name="Genome Res.">
        <title>Living with two extremes: conclusions from the genome sequence of Natronomonas pharaonis.</title>
        <authorList>
            <person name="Falb M."/>
            <person name="Pfeiffer F."/>
            <person name="Palm P."/>
            <person name="Rodewald K."/>
            <person name="Hickmann V."/>
            <person name="Tittor J."/>
            <person name="Oesterhelt D."/>
        </authorList>
    </citation>
    <scope>NUCLEOTIDE SEQUENCE [LARGE SCALE GENOMIC DNA]</scope>
    <source>
        <strain>ATCC 35678 / DSM 2160 / CIP 103997 / JCM 8858 / NBRC 14720 / NCIMB 2260 / Gabara</strain>
    </source>
</reference>
<proteinExistence type="inferred from homology"/>
<accession>Q3IRM1</accession>
<comment type="similarity">
    <text evidence="3">In the N-terminal section; belongs to the ChdC family.</text>
</comment>
<protein>
    <recommendedName>
        <fullName>Putative heme-binding protein NP_2262A</fullName>
    </recommendedName>
</protein>
<organism>
    <name type="scientific">Natronomonas pharaonis (strain ATCC 35678 / DSM 2160 / CIP 103997 / JCM 8858 / NBRC 14720 / NCIMB 2260 / Gabara)</name>
    <name type="common">Halobacterium pharaonis</name>
    <dbReference type="NCBI Taxonomy" id="348780"/>
    <lineage>
        <taxon>Archaea</taxon>
        <taxon>Methanobacteriati</taxon>
        <taxon>Methanobacteriota</taxon>
        <taxon>Stenosarchaea group</taxon>
        <taxon>Halobacteria</taxon>
        <taxon>Halobacteriales</taxon>
        <taxon>Haloarculaceae</taxon>
        <taxon>Natronomonas</taxon>
    </lineage>
</organism>
<evidence type="ECO:0000250" key="1"/>
<evidence type="ECO:0000256" key="2">
    <source>
        <dbReference type="SAM" id="MobiDB-lite"/>
    </source>
</evidence>
<evidence type="ECO:0000305" key="3"/>
<evidence type="ECO:0000312" key="4">
    <source>
        <dbReference type="EMBL" id="CAI49222.1"/>
    </source>
</evidence>
<dbReference type="EMBL" id="CR936257">
    <property type="protein sequence ID" value="CAI49222.1"/>
    <property type="molecule type" value="Genomic_DNA"/>
</dbReference>
<dbReference type="RefSeq" id="WP_011322849.1">
    <property type="nucleotide sequence ID" value="NC_007426.1"/>
</dbReference>
<dbReference type="SMR" id="Q3IRM1"/>
<dbReference type="STRING" id="348780.NP_2262A"/>
<dbReference type="EnsemblBacteria" id="CAI49222">
    <property type="protein sequence ID" value="CAI49222"/>
    <property type="gene ID" value="NP_2262A"/>
</dbReference>
<dbReference type="GeneID" id="3701394"/>
<dbReference type="KEGG" id="nph:NP_2262A"/>
<dbReference type="eggNOG" id="arCOG03031">
    <property type="taxonomic scope" value="Archaea"/>
</dbReference>
<dbReference type="HOGENOM" id="CLU_470618_0_0_2"/>
<dbReference type="OrthoDB" id="8690at2157"/>
<dbReference type="Proteomes" id="UP000002698">
    <property type="component" value="Chromosome"/>
</dbReference>
<dbReference type="GO" id="GO:0020037">
    <property type="term" value="F:heme binding"/>
    <property type="evidence" value="ECO:0007669"/>
    <property type="project" value="InterPro"/>
</dbReference>
<dbReference type="GO" id="GO:0046872">
    <property type="term" value="F:metal ion binding"/>
    <property type="evidence" value="ECO:0007669"/>
    <property type="project" value="UniProtKB-KW"/>
</dbReference>
<dbReference type="GO" id="GO:0016491">
    <property type="term" value="F:oxidoreductase activity"/>
    <property type="evidence" value="ECO:0007669"/>
    <property type="project" value="InterPro"/>
</dbReference>
<dbReference type="Gene3D" id="3.30.70.100">
    <property type="match status" value="1"/>
</dbReference>
<dbReference type="Gene3D" id="3.30.70.1030">
    <property type="entry name" value="Apc35880, domain 1"/>
    <property type="match status" value="2"/>
</dbReference>
<dbReference type="InterPro" id="IPR007138">
    <property type="entry name" value="ABM_dom"/>
</dbReference>
<dbReference type="InterPro" id="IPR010644">
    <property type="entry name" value="ChdC/CLD"/>
</dbReference>
<dbReference type="InterPro" id="IPR011008">
    <property type="entry name" value="Dimeric_a/b-barrel"/>
</dbReference>
<dbReference type="NCBIfam" id="NF007124">
    <property type="entry name" value="PRK09565.1"/>
    <property type="match status" value="2"/>
</dbReference>
<dbReference type="NCBIfam" id="NF008913">
    <property type="entry name" value="PRK12276.1"/>
    <property type="match status" value="1"/>
</dbReference>
<dbReference type="PANTHER" id="PTHR36843:SF1">
    <property type="entry name" value="COPROHEME DECARBOXYLASE"/>
    <property type="match status" value="1"/>
</dbReference>
<dbReference type="PANTHER" id="PTHR36843">
    <property type="entry name" value="HEME-DEPENDENT PEROXIDASE YWFI-RELATED"/>
    <property type="match status" value="1"/>
</dbReference>
<dbReference type="Pfam" id="PF03992">
    <property type="entry name" value="ABM"/>
    <property type="match status" value="1"/>
</dbReference>
<dbReference type="Pfam" id="PF06778">
    <property type="entry name" value="Chlor_dismutase"/>
    <property type="match status" value="1"/>
</dbReference>
<dbReference type="SUPFAM" id="SSF54909">
    <property type="entry name" value="Dimeric alpha+beta barrel"/>
    <property type="match status" value="2"/>
</dbReference>
<dbReference type="PROSITE" id="PS51725">
    <property type="entry name" value="ABM"/>
    <property type="match status" value="1"/>
</dbReference>